<feature type="signal peptide" evidence="2">
    <location>
        <begin position="1"/>
        <end position="19"/>
    </location>
</feature>
<feature type="chain" id="PRO_0000016796" description="Myoblast growth factor receptor egl-15">
    <location>
        <begin position="20"/>
        <end position="1040"/>
    </location>
</feature>
<feature type="topological domain" description="Extracellular" evidence="2">
    <location>
        <begin position="20"/>
        <end position="525"/>
    </location>
</feature>
<feature type="transmembrane region" description="Helical" evidence="2">
    <location>
        <begin position="526"/>
        <end position="549"/>
    </location>
</feature>
<feature type="topological domain" description="Cytoplasmic" evidence="2">
    <location>
        <begin position="550"/>
        <end position="1040"/>
    </location>
</feature>
<feature type="domain" description="Ig-like C2-type 1">
    <location>
        <begin position="33"/>
        <end position="125"/>
    </location>
</feature>
<feature type="domain" description="Ig-like C2-type 2">
    <location>
        <begin position="287"/>
        <end position="383"/>
    </location>
</feature>
<feature type="domain" description="Ig-like C2-type 3">
    <location>
        <begin position="391"/>
        <end position="501"/>
    </location>
</feature>
<feature type="domain" description="Protein kinase" evidence="4">
    <location>
        <begin position="640"/>
        <end position="931"/>
    </location>
</feature>
<feature type="region of interest" description="Disordered" evidence="6">
    <location>
        <begin position="234"/>
        <end position="267"/>
    </location>
</feature>
<feature type="region of interest" description="Disordered" evidence="6">
    <location>
        <begin position="952"/>
        <end position="984"/>
    </location>
</feature>
<feature type="region of interest" description="Disordered" evidence="6">
    <location>
        <begin position="1021"/>
        <end position="1040"/>
    </location>
</feature>
<feature type="compositionally biased region" description="Basic and acidic residues" evidence="6">
    <location>
        <begin position="234"/>
        <end position="257"/>
    </location>
</feature>
<feature type="compositionally biased region" description="Polar residues" evidence="6">
    <location>
        <begin position="1022"/>
        <end position="1040"/>
    </location>
</feature>
<feature type="active site" description="Proton acceptor" evidence="4 5">
    <location>
        <position position="797"/>
    </location>
</feature>
<feature type="binding site" evidence="4">
    <location>
        <begin position="646"/>
        <end position="654"/>
    </location>
    <ligand>
        <name>ATP</name>
        <dbReference type="ChEBI" id="CHEBI:30616"/>
    </ligand>
</feature>
<feature type="binding site" evidence="4">
    <location>
        <position position="672"/>
    </location>
    <ligand>
        <name>ATP</name>
        <dbReference type="ChEBI" id="CHEBI:30616"/>
    </ligand>
</feature>
<feature type="modified residue" description="Phosphotyrosine; by autocatalysis" evidence="1">
    <location>
        <position position="828"/>
    </location>
</feature>
<feature type="glycosylation site" description="N-linked (GlcNAc...) asparagine" evidence="2">
    <location>
        <position position="121"/>
    </location>
</feature>
<feature type="glycosylation site" description="N-linked (GlcNAc...) asparagine" evidence="2">
    <location>
        <position position="280"/>
    </location>
</feature>
<feature type="glycosylation site" description="N-linked (GlcNAc...) asparagine" evidence="2">
    <location>
        <position position="299"/>
    </location>
</feature>
<feature type="glycosylation site" description="N-linked (GlcNAc...) asparagine" evidence="2">
    <location>
        <position position="401"/>
    </location>
</feature>
<feature type="glycosylation site" description="N-linked (GlcNAc...) asparagine" evidence="2">
    <location>
        <position position="407"/>
    </location>
</feature>
<feature type="glycosylation site" description="N-linked (GlcNAc...) asparagine" evidence="2">
    <location>
        <position position="433"/>
    </location>
</feature>
<feature type="glycosylation site" description="N-linked (GlcNAc...) asparagine" evidence="2">
    <location>
        <position position="440"/>
    </location>
</feature>
<feature type="glycosylation site" description="N-linked (GlcNAc...) asparagine" evidence="2">
    <location>
        <position position="449"/>
    </location>
</feature>
<feature type="glycosylation site" description="N-linked (GlcNAc...) asparagine" evidence="2">
    <location>
        <position position="474"/>
    </location>
</feature>
<feature type="glycosylation site" description="N-linked (GlcNAc...) asparagine" evidence="2">
    <location>
        <position position="497"/>
    </location>
</feature>
<feature type="disulfide bond" evidence="3">
    <location>
        <begin position="55"/>
        <end position="109"/>
    </location>
</feature>
<feature type="disulfide bond" evidence="3">
    <location>
        <begin position="314"/>
        <end position="367"/>
    </location>
</feature>
<feature type="disulfide bond" evidence="3">
    <location>
        <begin position="414"/>
        <end position="485"/>
    </location>
</feature>
<feature type="splice variant" id="VSP_019861" description="In isoform b." evidence="14">
    <original>FCDYFLFPDIHHLNIPMECVCLWKYNKEAKRSDVNYAAVTGEVCSKYASRMINRARKPLPMIPCFGDHCKEFDTTPVSDFGLPGKPEDDPLVKRVVLKKDDVIVPVHDSEESPSESR</original>
    <variation>PLKLFDWLTEHRVFDISHLLPKLLPPAEMRRVKSQLGGWEKMNNEQKIVRARHILRLRQINHALG</variation>
    <location>
        <begin position="129"/>
        <end position="245"/>
    </location>
</feature>
<feature type="splice variant" id="VSP_002991" description="In isoform c, isoform d and isoform e." evidence="14">
    <original>R</original>
    <variation>RL</variation>
    <location>
        <position position="829"/>
    </location>
</feature>
<feature type="splice variant" id="VSP_002992" description="In isoform c, isoform d and isoform e." evidence="14">
    <original>E</original>
    <variation>EVDQN</variation>
    <location>
        <position position="984"/>
    </location>
</feature>
<feature type="splice variant" id="VSP_002994" description="In isoform c." evidence="14">
    <original>RIPSNNNSMSKPEF</original>
    <variation>LYIHKVLNEPIGNGYVRQDKLARAVSGVANQSLDSALGSPAWPSYDRPSNKASCLDQTHQYYNTTSKIQYLHFTFDDPDCMTRSRDSAIFEESYHPNYIQSHPLYSKIIIKKNMTPRNPLPTKETIV</variation>
    <location>
        <begin position="1027"/>
        <end position="1040"/>
    </location>
</feature>
<feature type="splice variant" id="VSP_019862" description="In isoform d." evidence="14">
    <original>RIPSNNNSMSKPEF</original>
    <variation>LYIHKVLNEPIGNGYVRQDKLARAVSGVANQSLDSALGSPAWPSYDRPSNKASCLDDEKHHYYYS</variation>
    <location>
        <begin position="1027"/>
        <end position="1040"/>
    </location>
</feature>
<feature type="splice variant" id="VSP_019863" description="In isoform e." evidence="14">
    <original>RIPSNNNSMSKPEF</original>
    <variation>LYIHKVLNEPIGNGSNSPVL</variation>
    <location>
        <begin position="1027"/>
        <end position="1040"/>
    </location>
</feature>
<feature type="mutagenesis site" description="In n1775; loss of activity." evidence="12">
    <original>E</original>
    <variation>K</variation>
    <location>
        <position position="680"/>
    </location>
</feature>
<feature type="mutagenesis site" description="In n1783; loss of activity. Ectopic membrane extension in body wall muscles." evidence="11 12">
    <original>P</original>
    <variation>L</variation>
    <location>
        <position position="714"/>
    </location>
</feature>
<feature type="sequence conflict" description="In Ref. 2; AAP44084." evidence="15" ref="2">
    <original>Q</original>
    <variation>G</variation>
    <location>
        <position position="551"/>
    </location>
</feature>
<dbReference type="EC" id="2.7.10.1"/>
<dbReference type="EMBL" id="U39761">
    <property type="protein sequence ID" value="AAC46934.1"/>
    <property type="molecule type" value="mRNA"/>
</dbReference>
<dbReference type="EMBL" id="AY268435">
    <property type="protein sequence ID" value="AAP31029.1"/>
    <property type="molecule type" value="mRNA"/>
</dbReference>
<dbReference type="EMBL" id="AY268436">
    <property type="protein sequence ID" value="AAP31030.1"/>
    <property type="molecule type" value="mRNA"/>
</dbReference>
<dbReference type="EMBL" id="AY288941">
    <property type="protein sequence ID" value="AAP44084.1"/>
    <property type="molecule type" value="mRNA"/>
</dbReference>
<dbReference type="EMBL" id="AY288942">
    <property type="protein sequence ID" value="AAP44085.1"/>
    <property type="molecule type" value="mRNA"/>
</dbReference>
<dbReference type="EMBL" id="AY292532">
    <property type="protein sequence ID" value="AAP74805.1"/>
    <property type="molecule type" value="mRNA"/>
</dbReference>
<dbReference type="EMBL" id="Z81017">
    <property type="protein sequence ID" value="CAB02673.2"/>
    <property type="molecule type" value="Genomic_DNA"/>
</dbReference>
<dbReference type="EMBL" id="Z81017">
    <property type="protein sequence ID" value="CAC70094.2"/>
    <property type="molecule type" value="Genomic_DNA"/>
</dbReference>
<dbReference type="EMBL" id="Z81017">
    <property type="protein sequence ID" value="CAC70095.2"/>
    <property type="molecule type" value="Genomic_DNA"/>
</dbReference>
<dbReference type="EMBL" id="Z81017">
    <property type="protein sequence ID" value="CAD44136.1"/>
    <property type="molecule type" value="Genomic_DNA"/>
</dbReference>
<dbReference type="EMBL" id="Z81017">
    <property type="protein sequence ID" value="CAE47468.1"/>
    <property type="molecule type" value="Genomic_DNA"/>
</dbReference>
<dbReference type="PIR" id="A57638">
    <property type="entry name" value="A57638"/>
</dbReference>
<dbReference type="PIR" id="T22889">
    <property type="entry name" value="T22889"/>
</dbReference>
<dbReference type="RefSeq" id="NP_001024723.1">
    <property type="nucleotide sequence ID" value="NM_001029552.2"/>
</dbReference>
<dbReference type="RefSeq" id="NP_001024724.3">
    <property type="nucleotide sequence ID" value="NM_001029553.5"/>
</dbReference>
<dbReference type="RefSeq" id="NP_001024725.2">
    <property type="nucleotide sequence ID" value="NM_001029554.4"/>
</dbReference>
<dbReference type="RefSeq" id="NP_001024726.2">
    <property type="nucleotide sequence ID" value="NM_001029555.4"/>
</dbReference>
<dbReference type="RefSeq" id="NP_001367004.1">
    <molecule id="Q10656-2"/>
    <property type="nucleotide sequence ID" value="NM_001381098.1"/>
</dbReference>
<dbReference type="RefSeq" id="NP_001379182.1">
    <molecule id="Q10656-1"/>
    <property type="nucleotide sequence ID" value="NM_001392839.1"/>
</dbReference>
<dbReference type="RefSeq" id="NP_509842.2">
    <property type="nucleotide sequence ID" value="NM_077441.6"/>
</dbReference>
<dbReference type="SMR" id="Q10656"/>
<dbReference type="BioGRID" id="46202">
    <property type="interactions" value="162"/>
</dbReference>
<dbReference type="FunCoup" id="Q10656">
    <property type="interactions" value="323"/>
</dbReference>
<dbReference type="IntAct" id="Q10656">
    <property type="interactions" value="1"/>
</dbReference>
<dbReference type="STRING" id="6239.F58A3.2c.1"/>
<dbReference type="GlyCosmos" id="Q10656">
    <property type="glycosylation" value="10 sites, No reported glycans"/>
</dbReference>
<dbReference type="iPTMnet" id="Q10656"/>
<dbReference type="PaxDb" id="6239-F58A3.2c"/>
<dbReference type="PeptideAtlas" id="Q10656"/>
<dbReference type="EnsemblMetazoa" id="F58A3.2a.1">
    <molecule id="Q10656-1"/>
    <property type="protein sequence ID" value="F58A3.2a.1"/>
    <property type="gene ID" value="WBGene00001184"/>
</dbReference>
<dbReference type="EnsemblMetazoa" id="F58A3.2a.2">
    <molecule id="Q10656-1"/>
    <property type="protein sequence ID" value="F58A3.2a.2"/>
    <property type="gene ID" value="WBGene00001184"/>
</dbReference>
<dbReference type="EnsemblMetazoa" id="F58A3.2a.3">
    <molecule id="Q10656-1"/>
    <property type="protein sequence ID" value="F58A3.2a.3"/>
    <property type="gene ID" value="WBGene00001184"/>
</dbReference>
<dbReference type="EnsemblMetazoa" id="F58A3.2a.4">
    <molecule id="Q10656-1"/>
    <property type="protein sequence ID" value="F58A3.2a.4"/>
    <property type="gene ID" value="WBGene00001184"/>
</dbReference>
<dbReference type="EnsemblMetazoa" id="F58A3.2a.5">
    <molecule id="Q10656-1"/>
    <property type="protein sequence ID" value="F58A3.2a.5"/>
    <property type="gene ID" value="WBGene00001184"/>
</dbReference>
<dbReference type="EnsemblMetazoa" id="F58A3.2a.6">
    <molecule id="Q10656-1"/>
    <property type="protein sequence ID" value="F58A3.2a.6"/>
    <property type="gene ID" value="WBGene00001184"/>
</dbReference>
<dbReference type="EnsemblMetazoa" id="F58A3.2b.1">
    <molecule id="Q10656-2"/>
    <property type="protein sequence ID" value="F58A3.2b.1"/>
    <property type="gene ID" value="WBGene00001184"/>
</dbReference>
<dbReference type="GeneID" id="181291"/>
<dbReference type="UCSC" id="F58A3.2e">
    <molecule id="Q10656-1"/>
    <property type="organism name" value="c. elegans"/>
</dbReference>
<dbReference type="AGR" id="WB:WBGene00001184"/>
<dbReference type="WormBase" id="F58A3.2a">
    <molecule id="Q10656-1"/>
    <property type="protein sequence ID" value="CE28238"/>
    <property type="gene ID" value="WBGene00001184"/>
    <property type="gene designation" value="egl-15"/>
</dbReference>
<dbReference type="WormBase" id="F58A3.2b">
    <molecule id="Q10656-2"/>
    <property type="protein sequence ID" value="CE35726"/>
    <property type="gene ID" value="WBGene00001184"/>
    <property type="gene designation" value="egl-15"/>
</dbReference>
<dbReference type="eggNOG" id="KOG0200">
    <property type="taxonomic scope" value="Eukaryota"/>
</dbReference>
<dbReference type="GeneTree" id="ENSGT00940000167157"/>
<dbReference type="InParanoid" id="Q10656"/>
<dbReference type="PhylomeDB" id="Q10656"/>
<dbReference type="BRENDA" id="2.7.10.1">
    <property type="organism ID" value="1045"/>
</dbReference>
<dbReference type="Reactome" id="R-CEL-1257604">
    <property type="pathway name" value="PIP3 activates AKT signaling"/>
</dbReference>
<dbReference type="Reactome" id="R-CEL-1307965">
    <property type="pathway name" value="betaKlotho-mediated ligand binding"/>
</dbReference>
<dbReference type="Reactome" id="R-CEL-190322">
    <property type="pathway name" value="FGFR4 ligand binding and activation"/>
</dbReference>
<dbReference type="Reactome" id="R-CEL-190370">
    <property type="pathway name" value="FGFR1b ligand binding and activation"/>
</dbReference>
<dbReference type="Reactome" id="R-CEL-190371">
    <property type="pathway name" value="FGFR3b ligand binding and activation"/>
</dbReference>
<dbReference type="Reactome" id="R-CEL-190372">
    <property type="pathway name" value="FGFR3c ligand binding and activation"/>
</dbReference>
<dbReference type="Reactome" id="R-CEL-190373">
    <property type="pathway name" value="FGFR1c ligand binding and activation"/>
</dbReference>
<dbReference type="Reactome" id="R-CEL-190374">
    <property type="pathway name" value="FGFR1c and Klotho ligand binding and activation"/>
</dbReference>
<dbReference type="Reactome" id="R-CEL-190375">
    <property type="pathway name" value="FGFR2c ligand binding and activation"/>
</dbReference>
<dbReference type="Reactome" id="R-CEL-190377">
    <property type="pathway name" value="FGFR2b ligand binding and activation"/>
</dbReference>
<dbReference type="Reactome" id="R-CEL-445144">
    <property type="pathway name" value="Signal transduction by L1"/>
</dbReference>
<dbReference type="Reactome" id="R-CEL-5654219">
    <property type="pathway name" value="Phospholipase C-mediated cascade: FGFR1"/>
</dbReference>
<dbReference type="Reactome" id="R-CEL-5654228">
    <property type="pathway name" value="Phospholipase C-mediated cascade, FGFR4"/>
</dbReference>
<dbReference type="Reactome" id="R-CEL-5654688">
    <property type="pathway name" value="SHC-mediated cascade:FGFR1"/>
</dbReference>
<dbReference type="Reactome" id="R-CEL-5654689">
    <property type="pathway name" value="PI-3K cascade:FGFR1"/>
</dbReference>
<dbReference type="Reactome" id="R-CEL-5654693">
    <property type="pathway name" value="FRS-mediated FGFR1 signaling"/>
</dbReference>
<dbReference type="Reactome" id="R-CEL-5654699">
    <property type="pathway name" value="SHC-mediated cascade:FGFR2"/>
</dbReference>
<dbReference type="Reactome" id="R-CEL-5654704">
    <property type="pathway name" value="SHC-mediated cascade:FGFR3"/>
</dbReference>
<dbReference type="Reactome" id="R-CEL-5654712">
    <property type="pathway name" value="FRS-mediated FGFR4 signaling"/>
</dbReference>
<dbReference type="Reactome" id="R-CEL-5654719">
    <property type="pathway name" value="SHC-mediated cascade:FGFR4"/>
</dbReference>
<dbReference type="Reactome" id="R-CEL-5654720">
    <property type="pathway name" value="PI-3K cascade:FGFR4"/>
</dbReference>
<dbReference type="Reactome" id="R-CEL-5654726">
    <property type="pathway name" value="Negative regulation of FGFR1 signaling"/>
</dbReference>
<dbReference type="Reactome" id="R-CEL-5654733">
    <property type="pathway name" value="Negative regulation of FGFR4 signaling"/>
</dbReference>
<dbReference type="Reactome" id="R-CEL-5673001">
    <property type="pathway name" value="RAF/MAP kinase cascade"/>
</dbReference>
<dbReference type="Reactome" id="R-CEL-6811558">
    <property type="pathway name" value="PI5P, PP2A and IER3 Regulate PI3K/AKT Signaling"/>
</dbReference>
<dbReference type="SignaLink" id="Q10656"/>
<dbReference type="PRO" id="PR:Q10656"/>
<dbReference type="Proteomes" id="UP000001940">
    <property type="component" value="Chromosome X"/>
</dbReference>
<dbReference type="Bgee" id="WBGene00001184">
    <property type="expression patterns" value="Expressed in larva and 4 other cell types or tissues"/>
</dbReference>
<dbReference type="ExpressionAtlas" id="Q10656">
    <property type="expression patterns" value="baseline and differential"/>
</dbReference>
<dbReference type="GO" id="GO:0005886">
    <property type="term" value="C:plasma membrane"/>
    <property type="evidence" value="ECO:0000318"/>
    <property type="project" value="GO_Central"/>
</dbReference>
<dbReference type="GO" id="GO:0043235">
    <property type="term" value="C:receptor complex"/>
    <property type="evidence" value="ECO:0000318"/>
    <property type="project" value="GO_Central"/>
</dbReference>
<dbReference type="GO" id="GO:0005524">
    <property type="term" value="F:ATP binding"/>
    <property type="evidence" value="ECO:0007669"/>
    <property type="project" value="UniProtKB-KW"/>
</dbReference>
<dbReference type="GO" id="GO:0046872">
    <property type="term" value="F:metal ion binding"/>
    <property type="evidence" value="ECO:0007669"/>
    <property type="project" value="UniProtKB-KW"/>
</dbReference>
<dbReference type="GO" id="GO:0004672">
    <property type="term" value="F:protein kinase activity"/>
    <property type="evidence" value="ECO:0000314"/>
    <property type="project" value="WormBase"/>
</dbReference>
<dbReference type="GO" id="GO:0004714">
    <property type="term" value="F:transmembrane receptor protein tyrosine kinase activity"/>
    <property type="evidence" value="ECO:0000318"/>
    <property type="project" value="GO_Central"/>
</dbReference>
<dbReference type="GO" id="GO:0016477">
    <property type="term" value="P:cell migration"/>
    <property type="evidence" value="ECO:0000315"/>
    <property type="project" value="WormBase"/>
</dbReference>
<dbReference type="GO" id="GO:0048546">
    <property type="term" value="P:digestive tract morphogenesis"/>
    <property type="evidence" value="ECO:0000315"/>
    <property type="project" value="WormBase"/>
</dbReference>
<dbReference type="GO" id="GO:0018991">
    <property type="term" value="P:egg-laying behavior"/>
    <property type="evidence" value="ECO:0000315"/>
    <property type="project" value="WormBase"/>
</dbReference>
<dbReference type="GO" id="GO:0008543">
    <property type="term" value="P:fibroblast growth factor receptor signaling pathway"/>
    <property type="evidence" value="ECO:0000315"/>
    <property type="project" value="WormBase"/>
</dbReference>
<dbReference type="GO" id="GO:0046716">
    <property type="term" value="P:muscle cell cellular homeostasis"/>
    <property type="evidence" value="ECO:0000316"/>
    <property type="project" value="UniProtKB"/>
</dbReference>
<dbReference type="GO" id="GO:0007517">
    <property type="term" value="P:muscle organ development"/>
    <property type="evidence" value="ECO:0000315"/>
    <property type="project" value="WormBase"/>
</dbReference>
<dbReference type="GO" id="GO:0002119">
    <property type="term" value="P:nematode larval development"/>
    <property type="evidence" value="ECO:0000315"/>
    <property type="project" value="WormBase"/>
</dbReference>
<dbReference type="GO" id="GO:0008284">
    <property type="term" value="P:positive regulation of cell population proliferation"/>
    <property type="evidence" value="ECO:0000318"/>
    <property type="project" value="GO_Central"/>
</dbReference>
<dbReference type="GO" id="GO:0043410">
    <property type="term" value="P:positive regulation of MAPK cascade"/>
    <property type="evidence" value="ECO:0000318"/>
    <property type="project" value="GO_Central"/>
</dbReference>
<dbReference type="GO" id="GO:0031344">
    <property type="term" value="P:regulation of cell projection organization"/>
    <property type="evidence" value="ECO:0000315"/>
    <property type="project" value="WormBase"/>
</dbReference>
<dbReference type="GO" id="GO:0031647">
    <property type="term" value="P:regulation of protein stability"/>
    <property type="evidence" value="ECO:0000316"/>
    <property type="project" value="UniProtKB"/>
</dbReference>
<dbReference type="CDD" id="cd00096">
    <property type="entry name" value="Ig"/>
    <property type="match status" value="1"/>
</dbReference>
<dbReference type="CDD" id="cd04974">
    <property type="entry name" value="IgI_3_FGFR"/>
    <property type="match status" value="1"/>
</dbReference>
<dbReference type="FunFam" id="2.60.40.10:FF:001641">
    <property type="entry name" value="Myoblast growth factor receptor egl-15"/>
    <property type="match status" value="2"/>
</dbReference>
<dbReference type="FunFam" id="2.60.40.10:FF:001689">
    <property type="entry name" value="Myoblast growth factor receptor egl-15"/>
    <property type="match status" value="1"/>
</dbReference>
<dbReference type="FunFam" id="3.30.200.20:FF:000698">
    <property type="entry name" value="Myoblast growth factor receptor egl-15"/>
    <property type="match status" value="1"/>
</dbReference>
<dbReference type="FunFam" id="1.10.510.10:FF:000089">
    <property type="entry name" value="Tyrosine-protein kinase receptor TYRO3"/>
    <property type="match status" value="1"/>
</dbReference>
<dbReference type="Gene3D" id="2.60.40.10">
    <property type="entry name" value="Immunoglobulins"/>
    <property type="match status" value="3"/>
</dbReference>
<dbReference type="Gene3D" id="3.30.200.20">
    <property type="entry name" value="Phosphorylase Kinase, domain 1"/>
    <property type="match status" value="1"/>
</dbReference>
<dbReference type="Gene3D" id="1.10.510.10">
    <property type="entry name" value="Transferase(Phosphotransferase) domain 1"/>
    <property type="match status" value="1"/>
</dbReference>
<dbReference type="InterPro" id="IPR007110">
    <property type="entry name" value="Ig-like_dom"/>
</dbReference>
<dbReference type="InterPro" id="IPR036179">
    <property type="entry name" value="Ig-like_dom_sf"/>
</dbReference>
<dbReference type="InterPro" id="IPR013783">
    <property type="entry name" value="Ig-like_fold"/>
</dbReference>
<dbReference type="InterPro" id="IPR013098">
    <property type="entry name" value="Ig_I-set"/>
</dbReference>
<dbReference type="InterPro" id="IPR003599">
    <property type="entry name" value="Ig_sub"/>
</dbReference>
<dbReference type="InterPro" id="IPR003598">
    <property type="entry name" value="Ig_sub2"/>
</dbReference>
<dbReference type="InterPro" id="IPR011009">
    <property type="entry name" value="Kinase-like_dom_sf"/>
</dbReference>
<dbReference type="InterPro" id="IPR000719">
    <property type="entry name" value="Prot_kinase_dom"/>
</dbReference>
<dbReference type="InterPro" id="IPR017441">
    <property type="entry name" value="Protein_kinase_ATP_BS"/>
</dbReference>
<dbReference type="InterPro" id="IPR050122">
    <property type="entry name" value="RTK"/>
</dbReference>
<dbReference type="InterPro" id="IPR001245">
    <property type="entry name" value="Ser-Thr/Tyr_kinase_cat_dom"/>
</dbReference>
<dbReference type="InterPro" id="IPR008266">
    <property type="entry name" value="Tyr_kinase_AS"/>
</dbReference>
<dbReference type="InterPro" id="IPR020635">
    <property type="entry name" value="Tyr_kinase_cat_dom"/>
</dbReference>
<dbReference type="PANTHER" id="PTHR24416:SF550">
    <property type="entry name" value="FIBROBLAST GROWTH FACTOR RECEPTOR HOMOLOG 1-RELATED"/>
    <property type="match status" value="1"/>
</dbReference>
<dbReference type="PANTHER" id="PTHR24416">
    <property type="entry name" value="TYROSINE-PROTEIN KINASE RECEPTOR"/>
    <property type="match status" value="1"/>
</dbReference>
<dbReference type="Pfam" id="PF07679">
    <property type="entry name" value="I-set"/>
    <property type="match status" value="3"/>
</dbReference>
<dbReference type="Pfam" id="PF07714">
    <property type="entry name" value="PK_Tyr_Ser-Thr"/>
    <property type="match status" value="1"/>
</dbReference>
<dbReference type="PIRSF" id="PIRSF000615">
    <property type="entry name" value="TyrPK_CSF1-R"/>
    <property type="match status" value="1"/>
</dbReference>
<dbReference type="PRINTS" id="PR00109">
    <property type="entry name" value="TYRKINASE"/>
</dbReference>
<dbReference type="SMART" id="SM00409">
    <property type="entry name" value="IG"/>
    <property type="match status" value="3"/>
</dbReference>
<dbReference type="SMART" id="SM00408">
    <property type="entry name" value="IGc2"/>
    <property type="match status" value="3"/>
</dbReference>
<dbReference type="SMART" id="SM00219">
    <property type="entry name" value="TyrKc"/>
    <property type="match status" value="1"/>
</dbReference>
<dbReference type="SUPFAM" id="SSF48726">
    <property type="entry name" value="Immunoglobulin"/>
    <property type="match status" value="3"/>
</dbReference>
<dbReference type="SUPFAM" id="SSF56112">
    <property type="entry name" value="Protein kinase-like (PK-like)"/>
    <property type="match status" value="1"/>
</dbReference>
<dbReference type="PROSITE" id="PS50835">
    <property type="entry name" value="IG_LIKE"/>
    <property type="match status" value="3"/>
</dbReference>
<dbReference type="PROSITE" id="PS00107">
    <property type="entry name" value="PROTEIN_KINASE_ATP"/>
    <property type="match status" value="1"/>
</dbReference>
<dbReference type="PROSITE" id="PS50011">
    <property type="entry name" value="PROTEIN_KINASE_DOM"/>
    <property type="match status" value="1"/>
</dbReference>
<dbReference type="PROSITE" id="PS00109">
    <property type="entry name" value="PROTEIN_KINASE_TYR"/>
    <property type="match status" value="1"/>
</dbReference>
<comment type="function">
    <text evidence="7 8 9 10 11 12">Receptor tyrosine kinase required for larval development (PubMed:7585964). May phosphorylate adapter protein soc-1 which in turn may result in the recruitment and/or activation of phosphatase ptp-2 (PubMed:11689700). May activate the Ras/MAPK kinase signaling pathway which includes sem-5, sos-1, let-60/Ras, lin-45/Raf, mek-2 and mpk-1 (PubMed:11689700). Acts in the hypodermis to regulate axon growth and fluid homeostasis (PubMed:12835392, PubMed:7585964). Activates protein degradation in muscles (PubMed:14517244). Probably following interaction with ligand let-756, negatively regulates membrane protrusion from body wall muscles during larval development (PubMed:16495308). Plays a role in nicotinic acetylcholine receptor (nAChR)-mediated sensitivity to nicotine (PubMed:15990870). Regulates synaptic levels of nAChR subunit lev-1 in the nerve cord (PubMed:15990870).</text>
</comment>
<comment type="function">
    <molecule>Isoform b</molecule>
    <text evidence="8">Affects the maintenance of axon position without affecting axon growth. Interaction with egl-17 is required for the guidance of sex myoblast migration during gonad development.</text>
</comment>
<comment type="function">
    <molecule>Isoform a</molecule>
    <text evidence="8">Interaction with let-756 appears to play a role in maintaining body morphology at higher temperatures.</text>
</comment>
<comment type="function">
    <molecule>Isoform c</molecule>
    <text evidence="8">Interaction with let-756 appears to play a role in maintaining body morphology at higher temperatures.</text>
</comment>
<comment type="function">
    <molecule>Isoform d</molecule>
    <text evidence="8">Interaction with let-756 appears to play a role in maintaining body morphology at higher temperatures.</text>
</comment>
<comment type="function">
    <molecule>Isoform e</molecule>
    <text evidence="8">Interaction with let-756 appears to play a role in maintaining body morphology at higher temperatures.</text>
</comment>
<comment type="catalytic activity">
    <reaction evidence="5">
        <text>L-tyrosyl-[protein] + ATP = O-phospho-L-tyrosyl-[protein] + ADP + H(+)</text>
        <dbReference type="Rhea" id="RHEA:10596"/>
        <dbReference type="Rhea" id="RHEA-COMP:10136"/>
        <dbReference type="Rhea" id="RHEA-COMP:20101"/>
        <dbReference type="ChEBI" id="CHEBI:15378"/>
        <dbReference type="ChEBI" id="CHEBI:30616"/>
        <dbReference type="ChEBI" id="CHEBI:46858"/>
        <dbReference type="ChEBI" id="CHEBI:61978"/>
        <dbReference type="ChEBI" id="CHEBI:456216"/>
        <dbReference type="EC" id="2.7.10.1"/>
    </reaction>
</comment>
<comment type="cofactor">
    <cofactor evidence="15">
        <name>Mg(2+)</name>
        <dbReference type="ChEBI" id="CHEBI:18420"/>
    </cofactor>
</comment>
<comment type="subcellular location">
    <subcellularLocation>
        <location>Membrane</location>
        <topology>Single-pass type I membrane protein</topology>
    </subcellularLocation>
</comment>
<comment type="alternative products">
    <event type="alternative splicing"/>
    <isoform>
        <id>Q10656-1</id>
        <name>a</name>
        <sequence type="displayed"/>
    </isoform>
    <isoform>
        <id>Q10656-2</id>
        <name>b</name>
        <name>EGL-15(5A)</name>
        <sequence type="described" ref="VSP_019861"/>
    </isoform>
    <isoform>
        <id>Q10656-3</id>
        <name>c</name>
        <sequence type="described" ref="VSP_002991 VSP_002992 VSP_002994"/>
    </isoform>
    <isoform>
        <id>Q10656-4</id>
        <name>d</name>
        <sequence type="described" ref="VSP_002991 VSP_002992 VSP_019862"/>
    </isoform>
    <isoform>
        <id>Q10656-5</id>
        <name>e</name>
        <sequence type="described" ref="VSP_002991 VSP_002992 VSP_019863"/>
    </isoform>
</comment>
<comment type="PTM">
    <text evidence="13">Activity is regulated by the phosphatase clr-1, however it is not known whether clr-1 acts directly on egl-15.</text>
</comment>
<comment type="disruption phenotype">
    <text evidence="11 12">Early arrest in larval development. Impaired guided migration of sex myoblasts (PubMed:7585964). RNAi-mediated knockdown causes ectopic membrane extension from body wall muscles (PubMed:16495308).</text>
</comment>
<comment type="similarity">
    <text evidence="4">Belongs to the protein kinase superfamily. Tyr protein kinase family. Fibroblast growth factor receptor subfamily.</text>
</comment>
<evidence type="ECO:0000250" key="1"/>
<evidence type="ECO:0000255" key="2"/>
<evidence type="ECO:0000255" key="3">
    <source>
        <dbReference type="PROSITE-ProRule" id="PRU00114"/>
    </source>
</evidence>
<evidence type="ECO:0000255" key="4">
    <source>
        <dbReference type="PROSITE-ProRule" id="PRU00159"/>
    </source>
</evidence>
<evidence type="ECO:0000255" key="5">
    <source>
        <dbReference type="PROSITE-ProRule" id="PRU10028"/>
    </source>
</evidence>
<evidence type="ECO:0000256" key="6">
    <source>
        <dbReference type="SAM" id="MobiDB-lite"/>
    </source>
</evidence>
<evidence type="ECO:0000269" key="7">
    <source>
    </source>
</evidence>
<evidence type="ECO:0000269" key="8">
    <source>
    </source>
</evidence>
<evidence type="ECO:0000269" key="9">
    <source>
    </source>
</evidence>
<evidence type="ECO:0000269" key="10">
    <source>
    </source>
</evidence>
<evidence type="ECO:0000269" key="11">
    <source>
    </source>
</evidence>
<evidence type="ECO:0000269" key="12">
    <source>
    </source>
</evidence>
<evidence type="ECO:0000269" key="13">
    <source>
    </source>
</evidence>
<evidence type="ECO:0000303" key="14">
    <source>
    </source>
</evidence>
<evidence type="ECO:0000305" key="15"/>
<proteinExistence type="evidence at protein level"/>
<protein>
    <recommendedName>
        <fullName>Myoblast growth factor receptor egl-15</fullName>
        <ecNumber>2.7.10.1</ecNumber>
    </recommendedName>
    <alternativeName>
        <fullName>Egg-laying defective protein 15</fullName>
    </alternativeName>
</protein>
<organism>
    <name type="scientific">Caenorhabditis elegans</name>
    <dbReference type="NCBI Taxonomy" id="6239"/>
    <lineage>
        <taxon>Eukaryota</taxon>
        <taxon>Metazoa</taxon>
        <taxon>Ecdysozoa</taxon>
        <taxon>Nematoda</taxon>
        <taxon>Chromadorea</taxon>
        <taxon>Rhabditida</taxon>
        <taxon>Rhabditina</taxon>
        <taxon>Rhabditomorpha</taxon>
        <taxon>Rhabditoidea</taxon>
        <taxon>Rhabditidae</taxon>
        <taxon>Peloderinae</taxon>
        <taxon>Caenorhabditis</taxon>
    </lineage>
</organism>
<gene>
    <name type="primary">egl-15</name>
    <name type="ORF">F58A3.2</name>
</gene>
<sequence length="1040" mass="118956">MSYFLASCLGVGLLSTVSCSLQGLTSHYRENIPRFKHVANERYEVFLGDEIKFDCQTAASKISAFVEWYRNDKLLKNDQIDKDKIRKDNNRMMLHLKNIDVSDQGLWSCRVHNAYGQISRNFTVEVIDFCDYFLFPDIHHLNIPMECVCLWKYNKEAKRSDVNYAAVTGEVCSKYASRMINRARKPLPMIPCFGDHCKEFDTTPVSDFGLPGKPEDDPLVKRVVLKKDDVIVPVHDSEESPSESRTEFINADEKENKEDEEEDYSVSQPVAPDAGLTELNITAEEPPYFKSNDNIVLFNETHALPAGRTLKLNCRAKGYPEPQIIWYKNGKMLKKSSARSGGYEFKFNRWSLEVEDAVVADSGEFHCEALNKVGSAKKYFHVIIVNRMRRPPIIVPNILANQSVNINDTATFHCKVVSDLLPHIIWVRINKINGSYSYYNNSAEEYMFNYTEMDTFDKAHVHHVGDESTLTIFNVSLDDQGIYACLSGNSLGMSMANATLTVNEFMAIHLLTGDEPKIDRWTTSDYIFTTILLFLLLAATLFGILFMVCKQTLHKKGFMDDTVGLVARKKRVVVSKRPMNEDNENSDDEPSPYQIQIIETPITKKEAARKQRKRMNSENTVLSEYEVDSDPVWEVERSKLSLVHMLGEGAFGEVWKATYKETENNEIAVAVKKLKMSAHEKELIDLVSEMETFKVIGEHENVLRLIGCCTGAGPLYVVVELCKHGNLRDFLRAHRPKEEKAKKSSQELTDYLEPRKASDKDDIELIPNLTQRHLVQFAWQVAQGMNFLASKKIIHRDLAARNVLVGDGHVLKISDFGLSRDVHCNDYYRKRGNGRLPIKWMALEALDSNVYTVESDVWSYGVLLWEIMTLGGTPYPTIAMPELYANLKEGYRMEPPHLCPQEVYHLMCSCWREKLEERPSFKTIVDYLDWMLTMTNETIEGSQEFNDQFFSERSTASGPVSPMESFQKKRKHRPLSAPVNLPSEPQHTICDDYESNFSVEPPNDPNHLYCNDNMLKNHIITPETSQRIPSNNNSMSKPEF</sequence>
<keyword id="KW-0025">Alternative splicing</keyword>
<keyword id="KW-0067">ATP-binding</keyword>
<keyword id="KW-0217">Developmental protein</keyword>
<keyword id="KW-1015">Disulfide bond</keyword>
<keyword id="KW-0325">Glycoprotein</keyword>
<keyword id="KW-0393">Immunoglobulin domain</keyword>
<keyword id="KW-0418">Kinase</keyword>
<keyword id="KW-0460">Magnesium</keyword>
<keyword id="KW-0472">Membrane</keyword>
<keyword id="KW-0479">Metal-binding</keyword>
<keyword id="KW-0547">Nucleotide-binding</keyword>
<keyword id="KW-0597">Phosphoprotein</keyword>
<keyword id="KW-0675">Receptor</keyword>
<keyword id="KW-1185">Reference proteome</keyword>
<keyword id="KW-0677">Repeat</keyword>
<keyword id="KW-0732">Signal</keyword>
<keyword id="KW-0808">Transferase</keyword>
<keyword id="KW-0812">Transmembrane</keyword>
<keyword id="KW-1133">Transmembrane helix</keyword>
<keyword id="KW-0829">Tyrosine-protein kinase</keyword>
<reference key="1">
    <citation type="journal article" date="1995" name="Cell">
        <title>An FGF receptor signaling pathway is required for the normal cell migrations of the sex myoblasts in C. elegans hermaphrodites.</title>
        <authorList>
            <person name="Devore D.L."/>
            <person name="Horvitz H.R."/>
            <person name="Stern M.J."/>
        </authorList>
    </citation>
    <scope>NUCLEOTIDE SEQUENCE [MRNA] (ISOFORM A)</scope>
    <scope>FUNCTION</scope>
    <scope>DISRUPTION PHENOTYPE</scope>
    <scope>MUTAGENESIS OF GLU-680 AND PRO-714</scope>
    <source>
        <strain>Bristol N2</strain>
    </source>
</reference>
<reference key="2">
    <citation type="journal article" date="2003" name="Development">
        <title>Alternative splicing affecting a novel domain in the C. elegans EGL-15 FGF receptor confers functional specificity.</title>
        <authorList>
            <person name="Goodman S.J."/>
            <person name="Branda C.S."/>
            <person name="Robinson M.K."/>
            <person name="Burdine R.D."/>
            <person name="Stern M.J."/>
        </authorList>
    </citation>
    <scope>NUCLEOTIDE SEQUENCE [MRNA] (ISOFORM B)</scope>
    <scope>NUCLEOTIDE SEQUENCE [MRNA] OF 932-1040 (ISOFORMS A; C; D AND E)</scope>
    <scope>FUNCTION</scope>
</reference>
<reference key="3">
    <citation type="journal article" date="1998" name="Science">
        <title>Genome sequence of the nematode C. elegans: a platform for investigating biology.</title>
        <authorList>
            <consortium name="The C. elegans sequencing consortium"/>
        </authorList>
    </citation>
    <scope>NUCLEOTIDE SEQUENCE [LARGE SCALE GENOMIC DNA]</scope>
    <source>
        <strain>Bristol N2</strain>
    </source>
</reference>
<reference key="4">
    <citation type="journal article" date="1998" name="Genes Dev.">
        <title>clr-1 encodes a receptor tyrosine phosphatase that negatively regulates an FGF receptor signaling pathway in Caenorhabditis elegans.</title>
        <authorList>
            <person name="Kokel M."/>
            <person name="Borland C.Z."/>
            <person name="DeLong L."/>
            <person name="Horvitz H.R."/>
            <person name="Stern M.J."/>
        </authorList>
    </citation>
    <scope>DEPHOSPHORYLATION BY CLR-1</scope>
    <source>
        <strain>Bristol N2</strain>
    </source>
</reference>
<reference key="5">
    <citation type="journal article" date="2001" name="Mol. Cell. Biol.">
        <title>The Caenorhabditis elegans EGL-15 signaling pathway implicates a DOS-like multisubstrate adaptor protein in fibroblast growth factor signal transduction.</title>
        <authorList>
            <person name="Schutzman J.L."/>
            <person name="Borland C.Z."/>
            <person name="Newman J.C."/>
            <person name="Robinson M.K."/>
            <person name="Kokel M."/>
            <person name="Stern M.J."/>
        </authorList>
    </citation>
    <scope>FUNCTION</scope>
</reference>
<reference key="6">
    <citation type="journal article" date="2003" name="EMBO J.">
        <title>Activated EGL-15 FGF receptor promotes protein degradation in muscles of Caenorhabditis elegans.</title>
        <authorList>
            <person name="Szewczyk N.J."/>
            <person name="Jacobson L.A."/>
        </authorList>
    </citation>
    <scope>FUNCTION</scope>
</reference>
<reference key="7">
    <citation type="journal article" date="2005" name="EMBO J.">
        <title>Identification and characterization of novel nicotinic receptor-associated proteins in Caenorhabditis elegans.</title>
        <authorList>
            <person name="Gottschalk A."/>
            <person name="Almedom R.B."/>
            <person name="Schedletzky T."/>
            <person name="Anderson S.D."/>
            <person name="Yates J.R. III"/>
            <person name="Schafer W.R."/>
        </authorList>
    </citation>
    <scope>FUNCTION</scope>
</reference>
<reference key="8">
    <citation type="journal article" date="2006" name="Development">
        <title>FGF negatively regulates muscle membrane extension in Caenorhabditis elegans.</title>
        <authorList>
            <person name="Dixon S.J."/>
            <person name="Alexander M."/>
            <person name="Fernandes R."/>
            <person name="Ricker N."/>
            <person name="Roy P.J."/>
        </authorList>
    </citation>
    <scope>FUNCTION</scope>
    <scope>DISRUPTION PHENOTYPE</scope>
    <scope>MUTAGENESIS OF PRO-714</scope>
</reference>
<name>EGL15_CAEEL</name>
<accession>Q10656</accession>
<accession>Q7JL68</accession>
<accession>Q7YZM7</accession>
<accession>Q7YZM8</accession>
<accession>Q7YZN0</accession>
<accession>Q7YZN1</accession>
<accession>Q7Z025</accession>
<accession>Q8MQ14</accession>
<accession>Q93804</accession>
<accession>Q95QE0</accession>
<accession>Q95QE1</accession>